<reference key="1">
    <citation type="journal article" date="2007" name="Genome Biol.">
        <title>Characterization and modeling of the Haemophilus influenzae core and supragenomes based on the complete genomic sequences of Rd and 12 clinical nontypeable strains.</title>
        <authorList>
            <person name="Hogg J.S."/>
            <person name="Hu F.Z."/>
            <person name="Janto B."/>
            <person name="Boissy R."/>
            <person name="Hayes J."/>
            <person name="Keefe R."/>
            <person name="Post J.C."/>
            <person name="Ehrlich G.D."/>
        </authorList>
    </citation>
    <scope>NUCLEOTIDE SEQUENCE [LARGE SCALE GENOMIC DNA]</scope>
    <source>
        <strain>PittGG</strain>
    </source>
</reference>
<sequence length="357" mass="40198">MKKYLLLALLPFLYACSNSSNQGINYDEAFAKDTQGLDILTGQFSHNIDRIWGVNELLVASRKDYVKYTDSFYTRSHVSFDEGNIVIETQQDLNRLHNAIVHTLLMGADAKGIDLFASGDVPISSRPFLLGQVVDHQGQQIANQVIASNFATYLIQNKLQTRRLQNGHTVQFVSVPMIANHVEVRARKYLPLIRKAAQRYGIDESLILGIMQTESSFNPYAISYANAIGLMQVVPHTAGRDVFAMKGKGGQPSTRYLYDPANNIDAGVSYLWILQNQYLDGITNPTSKRFAMISAYNSGAGAVLRVFDNDKDTAIYKINQMYPEQVYRILTTVHPSSQARNYLLKVDKAQKKFRVRR</sequence>
<keyword id="KW-0998">Cell outer membrane</keyword>
<keyword id="KW-0961">Cell wall biogenesis/degradation</keyword>
<keyword id="KW-0449">Lipoprotein</keyword>
<keyword id="KW-0456">Lyase</keyword>
<keyword id="KW-0472">Membrane</keyword>
<keyword id="KW-0564">Palmitate</keyword>
<keyword id="KW-0732">Signal</keyword>
<organism>
    <name type="scientific">Haemophilus influenzae (strain PittGG)</name>
    <dbReference type="NCBI Taxonomy" id="374931"/>
    <lineage>
        <taxon>Bacteria</taxon>
        <taxon>Pseudomonadati</taxon>
        <taxon>Pseudomonadota</taxon>
        <taxon>Gammaproteobacteria</taxon>
        <taxon>Pasteurellales</taxon>
        <taxon>Pasteurellaceae</taxon>
        <taxon>Haemophilus</taxon>
    </lineage>
</organism>
<protein>
    <recommendedName>
        <fullName evidence="1">Membrane-bound lytic murein transglycosylase C</fullName>
        <ecNumber evidence="1">4.2.2.n1</ecNumber>
    </recommendedName>
    <alternativeName>
        <fullName evidence="1">Murein lyase C</fullName>
    </alternativeName>
</protein>
<proteinExistence type="inferred from homology"/>
<feature type="signal peptide" evidence="1">
    <location>
        <begin position="1"/>
        <end position="15"/>
    </location>
</feature>
<feature type="chain" id="PRO_1000069477" description="Membrane-bound lytic murein transglycosylase C">
    <location>
        <begin position="16"/>
        <end position="357"/>
    </location>
</feature>
<feature type="lipid moiety-binding region" description="N-palmitoyl cysteine" evidence="1">
    <location>
        <position position="16"/>
    </location>
</feature>
<feature type="lipid moiety-binding region" description="S-diacylglycerol cysteine" evidence="1">
    <location>
        <position position="16"/>
    </location>
</feature>
<name>MLTC_HAEIG</name>
<evidence type="ECO:0000255" key="1">
    <source>
        <dbReference type="HAMAP-Rule" id="MF_01616"/>
    </source>
</evidence>
<accession>A5UHR5</accession>
<dbReference type="EC" id="4.2.2.n1" evidence="1"/>
<dbReference type="EMBL" id="CP000672">
    <property type="protein sequence ID" value="ABR00321.1"/>
    <property type="molecule type" value="Genomic_DNA"/>
</dbReference>
<dbReference type="SMR" id="A5UHR5"/>
<dbReference type="CAZy" id="GH23">
    <property type="family name" value="Glycoside Hydrolase Family 23"/>
</dbReference>
<dbReference type="KEGG" id="hiq:CGSHiGG_07300"/>
<dbReference type="HOGENOM" id="CLU_044583_0_0_6"/>
<dbReference type="Proteomes" id="UP000001990">
    <property type="component" value="Chromosome"/>
</dbReference>
<dbReference type="GO" id="GO:0009279">
    <property type="term" value="C:cell outer membrane"/>
    <property type="evidence" value="ECO:0007669"/>
    <property type="project" value="UniProtKB-SubCell"/>
</dbReference>
<dbReference type="GO" id="GO:0016798">
    <property type="term" value="F:hydrolase activity, acting on glycosyl bonds"/>
    <property type="evidence" value="ECO:0007669"/>
    <property type="project" value="InterPro"/>
</dbReference>
<dbReference type="GO" id="GO:0008933">
    <property type="term" value="F:peptidoglycan lytic transglycosylase activity"/>
    <property type="evidence" value="ECO:0007669"/>
    <property type="project" value="UniProtKB-UniRule"/>
</dbReference>
<dbReference type="GO" id="GO:0016998">
    <property type="term" value="P:cell wall macromolecule catabolic process"/>
    <property type="evidence" value="ECO:0007669"/>
    <property type="project" value="UniProtKB-UniRule"/>
</dbReference>
<dbReference type="GO" id="GO:0071555">
    <property type="term" value="P:cell wall organization"/>
    <property type="evidence" value="ECO:0007669"/>
    <property type="project" value="UniProtKB-KW"/>
</dbReference>
<dbReference type="GO" id="GO:0000270">
    <property type="term" value="P:peptidoglycan metabolic process"/>
    <property type="evidence" value="ECO:0007669"/>
    <property type="project" value="InterPro"/>
</dbReference>
<dbReference type="CDD" id="cd16893">
    <property type="entry name" value="LT_MltC_MltE"/>
    <property type="match status" value="1"/>
</dbReference>
<dbReference type="Gene3D" id="1.10.530.10">
    <property type="match status" value="1"/>
</dbReference>
<dbReference type="HAMAP" id="MF_01616">
    <property type="entry name" value="MltC"/>
    <property type="match status" value="1"/>
</dbReference>
<dbReference type="InterPro" id="IPR023346">
    <property type="entry name" value="Lysozyme-like_dom_sf"/>
</dbReference>
<dbReference type="InterPro" id="IPR023664">
    <property type="entry name" value="Murein_transglycosylaseC"/>
</dbReference>
<dbReference type="InterPro" id="IPR024570">
    <property type="entry name" value="Murein_transglycosylaseC_N"/>
</dbReference>
<dbReference type="InterPro" id="IPR000189">
    <property type="entry name" value="Transglyc_AS"/>
</dbReference>
<dbReference type="InterPro" id="IPR008258">
    <property type="entry name" value="Transglycosylase_SLT_dom_1"/>
</dbReference>
<dbReference type="NCBIfam" id="NF008670">
    <property type="entry name" value="PRK11671.1"/>
    <property type="match status" value="1"/>
</dbReference>
<dbReference type="PANTHER" id="PTHR37423:SF2">
    <property type="entry name" value="MEMBRANE-BOUND LYTIC MUREIN TRANSGLYCOSYLASE C"/>
    <property type="match status" value="1"/>
</dbReference>
<dbReference type="PANTHER" id="PTHR37423">
    <property type="entry name" value="SOLUBLE LYTIC MUREIN TRANSGLYCOSYLASE-RELATED"/>
    <property type="match status" value="1"/>
</dbReference>
<dbReference type="Pfam" id="PF11873">
    <property type="entry name" value="Mltc_N"/>
    <property type="match status" value="1"/>
</dbReference>
<dbReference type="Pfam" id="PF01464">
    <property type="entry name" value="SLT"/>
    <property type="match status" value="1"/>
</dbReference>
<dbReference type="SUPFAM" id="SSF53955">
    <property type="entry name" value="Lysozyme-like"/>
    <property type="match status" value="1"/>
</dbReference>
<dbReference type="PROSITE" id="PS51257">
    <property type="entry name" value="PROKAR_LIPOPROTEIN"/>
    <property type="match status" value="1"/>
</dbReference>
<dbReference type="PROSITE" id="PS00922">
    <property type="entry name" value="TRANSGLYCOSYLASE"/>
    <property type="match status" value="1"/>
</dbReference>
<comment type="function">
    <text evidence="1">Murein-degrading enzyme. May play a role in recycling of muropeptides during cell elongation and/or cell division.</text>
</comment>
<comment type="catalytic activity">
    <reaction evidence="1">
        <text>Exolytic cleavage of the (1-&gt;4)-beta-glycosidic linkage between N-acetylmuramic acid (MurNAc) and N-acetylglucosamine (GlcNAc) residues in peptidoglycan, from either the reducing or the non-reducing ends of the peptidoglycan chains, with concomitant formation of a 1,6-anhydrobond in the MurNAc residue.</text>
        <dbReference type="EC" id="4.2.2.n1"/>
    </reaction>
</comment>
<comment type="subcellular location">
    <subcellularLocation>
        <location evidence="1">Cell outer membrane</location>
        <topology evidence="1">Lipid-anchor</topology>
    </subcellularLocation>
</comment>
<comment type="similarity">
    <text evidence="1">Belongs to the transglycosylase Slt family.</text>
</comment>
<gene>
    <name evidence="1" type="primary">mltC</name>
    <name type="ordered locus">CGSHiGG_07300</name>
</gene>